<keyword id="KW-0963">Cytoplasm</keyword>
<keyword id="KW-0227">DNA damage</keyword>
<keyword id="KW-0228">DNA excision</keyword>
<keyword id="KW-0234">DNA repair</keyword>
<keyword id="KW-0238">DNA-binding</keyword>
<keyword id="KW-0378">Hydrolase</keyword>
<evidence type="ECO:0000255" key="1">
    <source>
        <dbReference type="HAMAP-Rule" id="MF_01956"/>
    </source>
</evidence>
<dbReference type="EC" id="3.2.2.28" evidence="1"/>
<dbReference type="EMBL" id="CP000826">
    <property type="protein sequence ID" value="ABV43395.1"/>
    <property type="molecule type" value="Genomic_DNA"/>
</dbReference>
<dbReference type="SMR" id="A8GJV5"/>
<dbReference type="STRING" id="399741.Spro_4301"/>
<dbReference type="KEGG" id="spe:Spro_4301"/>
<dbReference type="eggNOG" id="COG3663">
    <property type="taxonomic scope" value="Bacteria"/>
</dbReference>
<dbReference type="HOGENOM" id="CLU_042829_3_1_6"/>
<dbReference type="OrthoDB" id="9799921at2"/>
<dbReference type="GO" id="GO:0005737">
    <property type="term" value="C:cytoplasm"/>
    <property type="evidence" value="ECO:0007669"/>
    <property type="project" value="UniProtKB-SubCell"/>
</dbReference>
<dbReference type="GO" id="GO:0003677">
    <property type="term" value="F:DNA binding"/>
    <property type="evidence" value="ECO:0007669"/>
    <property type="project" value="UniProtKB-KW"/>
</dbReference>
<dbReference type="GO" id="GO:0008263">
    <property type="term" value="F:pyrimidine-specific mismatch base pair DNA N-glycosylase activity"/>
    <property type="evidence" value="ECO:0007669"/>
    <property type="project" value="UniProtKB-UniRule"/>
</dbReference>
<dbReference type="GO" id="GO:0004844">
    <property type="term" value="F:uracil DNA N-glycosylase activity"/>
    <property type="evidence" value="ECO:0007669"/>
    <property type="project" value="TreeGrafter"/>
</dbReference>
<dbReference type="GO" id="GO:0006285">
    <property type="term" value="P:base-excision repair, AP site formation"/>
    <property type="evidence" value="ECO:0007669"/>
    <property type="project" value="UniProtKB-UniRule"/>
</dbReference>
<dbReference type="CDD" id="cd10028">
    <property type="entry name" value="UDG-F2_TDG_MUG"/>
    <property type="match status" value="1"/>
</dbReference>
<dbReference type="Gene3D" id="3.40.470.10">
    <property type="entry name" value="Uracil-DNA glycosylase-like domain"/>
    <property type="match status" value="1"/>
</dbReference>
<dbReference type="HAMAP" id="MF_01956">
    <property type="entry name" value="MUG"/>
    <property type="match status" value="1"/>
</dbReference>
<dbReference type="InterPro" id="IPR015637">
    <property type="entry name" value="MUG/TDG"/>
</dbReference>
<dbReference type="InterPro" id="IPR023502">
    <property type="entry name" value="MUG_bact"/>
</dbReference>
<dbReference type="InterPro" id="IPR005122">
    <property type="entry name" value="Uracil-DNA_glycosylase-like"/>
</dbReference>
<dbReference type="InterPro" id="IPR036895">
    <property type="entry name" value="Uracil-DNA_glycosylase-like_sf"/>
</dbReference>
<dbReference type="NCBIfam" id="NF007570">
    <property type="entry name" value="PRK10201.1"/>
    <property type="match status" value="1"/>
</dbReference>
<dbReference type="PANTHER" id="PTHR12159">
    <property type="entry name" value="G/T AND G/U MISMATCH-SPECIFIC DNA GLYCOSYLASE"/>
    <property type="match status" value="1"/>
</dbReference>
<dbReference type="PANTHER" id="PTHR12159:SF9">
    <property type="entry name" value="G_T MISMATCH-SPECIFIC THYMINE DNA GLYCOSYLASE"/>
    <property type="match status" value="1"/>
</dbReference>
<dbReference type="Pfam" id="PF03167">
    <property type="entry name" value="UDG"/>
    <property type="match status" value="1"/>
</dbReference>
<dbReference type="SUPFAM" id="SSF52141">
    <property type="entry name" value="Uracil-DNA glycosylase-like"/>
    <property type="match status" value="1"/>
</dbReference>
<reference key="1">
    <citation type="submission" date="2007-09" db="EMBL/GenBank/DDBJ databases">
        <title>Complete sequence of chromosome of Serratia proteamaculans 568.</title>
        <authorList>
            <consortium name="US DOE Joint Genome Institute"/>
            <person name="Copeland A."/>
            <person name="Lucas S."/>
            <person name="Lapidus A."/>
            <person name="Barry K."/>
            <person name="Glavina del Rio T."/>
            <person name="Dalin E."/>
            <person name="Tice H."/>
            <person name="Pitluck S."/>
            <person name="Chain P."/>
            <person name="Malfatti S."/>
            <person name="Shin M."/>
            <person name="Vergez L."/>
            <person name="Schmutz J."/>
            <person name="Larimer F."/>
            <person name="Land M."/>
            <person name="Hauser L."/>
            <person name="Kyrpides N."/>
            <person name="Kim E."/>
            <person name="Taghavi S."/>
            <person name="Newman L."/>
            <person name="Vangronsveld J."/>
            <person name="van der Lelie D."/>
            <person name="Richardson P."/>
        </authorList>
    </citation>
    <scope>NUCLEOTIDE SEQUENCE [LARGE SCALE GENOMIC DNA]</scope>
    <source>
        <strain>568</strain>
    </source>
</reference>
<feature type="chain" id="PRO_1000070795" description="G/U mismatch-specific DNA glycosylase">
    <location>
        <begin position="1"/>
        <end position="162"/>
    </location>
</feature>
<protein>
    <recommendedName>
        <fullName evidence="1">G/U mismatch-specific DNA glycosylase</fullName>
        <ecNumber evidence="1">3.2.2.28</ecNumber>
    </recommendedName>
    <alternativeName>
        <fullName evidence="1">Double-strand-specific uracil glycosylase</fullName>
    </alternativeName>
    <alternativeName>
        <fullName evidence="1">Mismatch-specific uracil DNA-glycosylase</fullName>
        <shortName evidence="1">MUG</shortName>
    </alternativeName>
</protein>
<accession>A8GJV5</accession>
<organism>
    <name type="scientific">Serratia proteamaculans (strain 568)</name>
    <dbReference type="NCBI Taxonomy" id="399741"/>
    <lineage>
        <taxon>Bacteria</taxon>
        <taxon>Pseudomonadati</taxon>
        <taxon>Pseudomonadota</taxon>
        <taxon>Gammaproteobacteria</taxon>
        <taxon>Enterobacterales</taxon>
        <taxon>Yersiniaceae</taxon>
        <taxon>Serratia</taxon>
    </lineage>
</organism>
<sequence>MELLAPNLRVVFCGINPGLSSAHQGYPFANGSNRFWKVVHQAGFTDTQLAPEQWQQLQDTGCGITALVARPTVAASEVTRDELLSGGEALKEKILRYQPRALAILGKQAFSSAFGVKNAAWGRQEMTIGKTEVWVLPNPSGLNRATLEQLTESYRELFLALK</sequence>
<name>MUG_SERP5</name>
<comment type="function">
    <text evidence="1">Excises ethenocytosine and uracil, which can arise by alkylation or deamination of cytosine, respectively, from the corresponding mispairs with guanine in ds-DNA. It is capable of hydrolyzing the carbon-nitrogen bond between the sugar-phosphate backbone of the DNA and the mispaired base. The complementary strand guanine functions in substrate recognition. Required for DNA damage lesion repair in stationary-phase cells.</text>
</comment>
<comment type="catalytic activity">
    <reaction evidence="1">
        <text>Specifically hydrolyzes mismatched double-stranded DNA and polynucleotides, releasing free uracil.</text>
        <dbReference type="EC" id="3.2.2.28"/>
    </reaction>
</comment>
<comment type="subunit">
    <text evidence="1">Binds DNA as a monomer.</text>
</comment>
<comment type="subcellular location">
    <subcellularLocation>
        <location evidence="1">Cytoplasm</location>
    </subcellularLocation>
</comment>
<comment type="similarity">
    <text evidence="1">Belongs to the uracil-DNA glycosylase (UDG) superfamily. TDG/mug family.</text>
</comment>
<proteinExistence type="inferred from homology"/>
<gene>
    <name evidence="1" type="primary">mug</name>
    <name type="ordered locus">Spro_4301</name>
</gene>